<evidence type="ECO:0000250" key="1">
    <source>
        <dbReference type="UniProtKB" id="D5ARP7"/>
    </source>
</evidence>
<evidence type="ECO:0000250" key="2">
    <source>
        <dbReference type="UniProtKB" id="D9IA45"/>
    </source>
</evidence>
<evidence type="ECO:0000250" key="3">
    <source>
        <dbReference type="UniProtKB" id="Q03075"/>
    </source>
</evidence>
<evidence type="ECO:0000250" key="4">
    <source>
        <dbReference type="UniProtKB" id="Q52689"/>
    </source>
</evidence>
<evidence type="ECO:0000250" key="5">
    <source>
        <dbReference type="UniProtKB" id="Q8KS19"/>
    </source>
</evidence>
<evidence type="ECO:0000255" key="6"/>
<evidence type="ECO:0000255" key="7">
    <source>
        <dbReference type="PROSITE-ProRule" id="PRU00433"/>
    </source>
</evidence>
<evidence type="ECO:0000256" key="8">
    <source>
        <dbReference type="SAM" id="MobiDB-lite"/>
    </source>
</evidence>
<evidence type="ECO:0000269" key="9">
    <source>
    </source>
</evidence>
<evidence type="ECO:0000305" key="10"/>
<evidence type="ECO:0000312" key="11">
    <source>
        <dbReference type="EMBL" id="BAF90524.1"/>
    </source>
</evidence>
<evidence type="ECO:0000312" key="12">
    <source>
        <dbReference type="EMBL" id="CAA52432.1"/>
    </source>
</evidence>
<name>FIXP_AZOC5</name>
<proteinExistence type="inferred from homology"/>
<protein>
    <recommendedName>
        <fullName evidence="1 11">Cbb3-type cytochrome c oxidase subunit FixP</fullName>
        <shortName evidence="1">Cbb3-Cox subunit FixP</shortName>
    </recommendedName>
    <alternativeName>
        <fullName evidence="4">C-type cytochrome FixP</fullName>
        <shortName evidence="1">Cyt c(FixP)</shortName>
    </alternativeName>
    <alternativeName>
        <fullName evidence="1">Cytochrome c oxidase subunit III</fullName>
    </alternativeName>
</protein>
<sequence>MSTSHESHHAPVDGAGGPSTTGHEWDGIQELNNPLPRWWLWTFYATIIWAFGYWVAYPAWPLVSNYTSGVLGWNSRSAVVEQISDLQKLRAASSAKLANVPLEDIEKNPELLSLARAEGKVAFADNCAPCHGAGGGGAKGFPNLNDDDWLWGGTLAQIQQTITHGIRSGDDEGHQGNMLAFGSILSKADISNVADYVRSLSGAAPGDTPAAKKGAEIFAANCATCHGENGKGNQELGSKNLTDGIWLYGGDKATIVQTITNGRGGVMPAWGPRLSPTTIKALTVYVHTLGGGQ</sequence>
<reference evidence="12" key="1">
    <citation type="journal article" date="1993" name="FEMS Microbiol. Lett.">
        <title>Role of the fixGHI region of Azorhizobium caulinodans in free-living and symbiotic nitrogen fixation.</title>
        <authorList>
            <person name="Mandon K."/>
            <person name="Kaminski P.A."/>
            <person name="Mougel C."/>
            <person name="Desnoues N."/>
            <person name="Elmerich C."/>
        </authorList>
    </citation>
    <scope>NUCLEOTIDE SEQUENCE [GENOMIC DNA]</scope>
    <source>
        <strain evidence="12">ATCC 43989 / DSM 5975 / JCM 20966 / LMG 6465 / NBRC 14845 / NCIMB 13405 / ORS 571</strain>
    </source>
</reference>
<reference evidence="10 12" key="2">
    <citation type="journal article" date="1994" name="J. Bacteriol.">
        <title>Functional analysis of the fixNOQP region of Azorhizobium caulinodans.</title>
        <authorList>
            <person name="Mandon K."/>
            <person name="Kaminski P.A."/>
            <person name="Elmerich C."/>
        </authorList>
    </citation>
    <scope>NUCLEOTIDE SEQUENCE [GENOMIC DNA]</scope>
    <scope>COFACTOR</scope>
    <source>
        <strain evidence="9">ATCC 43989 / DSM 5975 / JCM 20966 / LMG 6465 / NBRC 14845 / NCIMB 13405 / ORS 571</strain>
    </source>
</reference>
<reference evidence="11" key="3">
    <citation type="submission" date="2007-04" db="EMBL/GenBank/DDBJ databases">
        <title>Complete genome sequence of the nitrogen-fixing bacterium Azorhizobium caulinodans ORS571.</title>
        <authorList>
            <person name="Lee K.B."/>
            <person name="Backer P.D."/>
            <person name="Aono T."/>
            <person name="Liu C.T."/>
            <person name="Suzuki S."/>
            <person name="Suzuki T."/>
            <person name="Kaneko T."/>
            <person name="Yamada M."/>
            <person name="Tabata S."/>
            <person name="Kupfer D.M."/>
            <person name="Najar F.Z."/>
            <person name="Wiley G.B."/>
            <person name="Roe B."/>
            <person name="Binnewies T."/>
            <person name="Ussery D."/>
            <person name="Vereecke D."/>
            <person name="Gevers D."/>
            <person name="Holsters M."/>
            <person name="Oyaizu H."/>
        </authorList>
    </citation>
    <scope>NUCLEOTIDE SEQUENCE [LARGE SCALE GENOMIC DNA]</scope>
    <source>
        <strain evidence="11">ATCC 43989 / DSM 5975 / JCM 20966 / LMG 6465 / NBRC 14845 / NCIMB 13405 / ORS 571</strain>
    </source>
</reference>
<organism>
    <name type="scientific">Azorhizobium caulinodans (strain ATCC 43989 / DSM 5975 / JCM 20966 / LMG 6465 / NBRC 14845 / NCIMB 13405 / ORS 571)</name>
    <dbReference type="NCBI Taxonomy" id="438753"/>
    <lineage>
        <taxon>Bacteria</taxon>
        <taxon>Pseudomonadati</taxon>
        <taxon>Pseudomonadota</taxon>
        <taxon>Alphaproteobacteria</taxon>
        <taxon>Hyphomicrobiales</taxon>
        <taxon>Xanthobacteraceae</taxon>
        <taxon>Azorhizobium</taxon>
    </lineage>
</organism>
<gene>
    <name evidence="11" type="primary">fixP</name>
    <name type="ordered locus">AZC_4526</name>
</gene>
<comment type="function">
    <text evidence="1 2 3">C-type cytochrome. Part of the cbb3-type cytochrome c oxidase complex. FixP subunit is required for transferring electrons from donor cytochrome c via its heme groups to FixO subunit. From there, electrons are shuttled to the catalytic binuclear center of FixN subunit where oxygen reduction takes place. The complex also functions as a proton pump (By similarity).</text>
</comment>
<comment type="cofactor">
    <cofactor evidence="2 9">
        <name>heme c</name>
        <dbReference type="ChEBI" id="CHEBI:61717"/>
    </cofactor>
    <text evidence="2 9">Binds 2 heme C groups per subunit.</text>
</comment>
<comment type="pathway">
    <text evidence="1">Energy metabolism; oxidative phosphorylation.</text>
</comment>
<comment type="subunit">
    <text evidence="1">Component of the cbb3-type cytochrome c oxidase at least composed of FixN, FixO, FixQ and FixP.</text>
</comment>
<comment type="subcellular location">
    <subcellularLocation>
        <location evidence="5 6">Cell inner membrane</location>
        <topology evidence="5 6">Single-pass membrane protein</topology>
    </subcellularLocation>
</comment>
<comment type="similarity">
    <text evidence="10">Belongs to the CcoP / FixP family.</text>
</comment>
<keyword id="KW-0997">Cell inner membrane</keyword>
<keyword id="KW-1003">Cell membrane</keyword>
<keyword id="KW-0249">Electron transport</keyword>
<keyword id="KW-0349">Heme</keyword>
<keyword id="KW-0375">Hydrogen ion transport</keyword>
<keyword id="KW-0406">Ion transport</keyword>
<keyword id="KW-0408">Iron</keyword>
<keyword id="KW-0472">Membrane</keyword>
<keyword id="KW-0479">Metal-binding</keyword>
<keyword id="KW-0560">Oxidoreductase</keyword>
<keyword id="KW-1185">Reference proteome</keyword>
<keyword id="KW-0677">Repeat</keyword>
<keyword id="KW-0679">Respiratory chain</keyword>
<keyword id="KW-0812">Transmembrane</keyword>
<keyword id="KW-1133">Transmembrane helix</keyword>
<keyword id="KW-0813">Transport</keyword>
<dbReference type="EMBL" id="X74410">
    <property type="protein sequence ID" value="CAA52432.1"/>
    <property type="molecule type" value="Genomic_DNA"/>
</dbReference>
<dbReference type="EMBL" id="AP009384">
    <property type="protein sequence ID" value="BAF90524.1"/>
    <property type="molecule type" value="Genomic_DNA"/>
</dbReference>
<dbReference type="PIR" id="D55582">
    <property type="entry name" value="D55582"/>
</dbReference>
<dbReference type="SMR" id="A8HZ17"/>
<dbReference type="STRING" id="438753.AZC_4526"/>
<dbReference type="KEGG" id="azc:AZC_4526"/>
<dbReference type="eggNOG" id="COG2010">
    <property type="taxonomic scope" value="Bacteria"/>
</dbReference>
<dbReference type="HOGENOM" id="CLU_047545_2_0_5"/>
<dbReference type="UniPathway" id="UPA00705"/>
<dbReference type="Proteomes" id="UP000000270">
    <property type="component" value="Chromosome"/>
</dbReference>
<dbReference type="GO" id="GO:0005886">
    <property type="term" value="C:plasma membrane"/>
    <property type="evidence" value="ECO:0007669"/>
    <property type="project" value="UniProtKB-SubCell"/>
</dbReference>
<dbReference type="GO" id="GO:0009055">
    <property type="term" value="F:electron transfer activity"/>
    <property type="evidence" value="ECO:0007669"/>
    <property type="project" value="InterPro"/>
</dbReference>
<dbReference type="GO" id="GO:0020037">
    <property type="term" value="F:heme binding"/>
    <property type="evidence" value="ECO:0007669"/>
    <property type="project" value="InterPro"/>
</dbReference>
<dbReference type="GO" id="GO:0005506">
    <property type="term" value="F:iron ion binding"/>
    <property type="evidence" value="ECO:0007669"/>
    <property type="project" value="InterPro"/>
</dbReference>
<dbReference type="GO" id="GO:0016491">
    <property type="term" value="F:oxidoreductase activity"/>
    <property type="evidence" value="ECO:0007669"/>
    <property type="project" value="UniProtKB-KW"/>
</dbReference>
<dbReference type="GO" id="GO:0006119">
    <property type="term" value="P:oxidative phosphorylation"/>
    <property type="evidence" value="ECO:0007669"/>
    <property type="project" value="UniProtKB-UniPathway"/>
</dbReference>
<dbReference type="GO" id="GO:1902600">
    <property type="term" value="P:proton transmembrane transport"/>
    <property type="evidence" value="ECO:0007669"/>
    <property type="project" value="UniProtKB-KW"/>
</dbReference>
<dbReference type="Gene3D" id="6.10.280.130">
    <property type="match status" value="1"/>
</dbReference>
<dbReference type="Gene3D" id="1.10.760.10">
    <property type="entry name" value="Cytochrome c-like domain"/>
    <property type="match status" value="2"/>
</dbReference>
<dbReference type="InterPro" id="IPR032858">
    <property type="entry name" value="CcoP_N"/>
</dbReference>
<dbReference type="InterPro" id="IPR038414">
    <property type="entry name" value="CcoP_N_sf"/>
</dbReference>
<dbReference type="InterPro" id="IPR009056">
    <property type="entry name" value="Cyt_c-like_dom"/>
</dbReference>
<dbReference type="InterPro" id="IPR036909">
    <property type="entry name" value="Cyt_c-like_dom_sf"/>
</dbReference>
<dbReference type="InterPro" id="IPR008168">
    <property type="entry name" value="Cyt_C_IC"/>
</dbReference>
<dbReference type="InterPro" id="IPR004678">
    <property type="entry name" value="Cyt_c_oxidase_cbb3_su3"/>
</dbReference>
<dbReference type="InterPro" id="IPR050597">
    <property type="entry name" value="Cytochrome_c_Oxidase_Subunit"/>
</dbReference>
<dbReference type="NCBIfam" id="TIGR00782">
    <property type="entry name" value="ccoP"/>
    <property type="match status" value="1"/>
</dbReference>
<dbReference type="PANTHER" id="PTHR33751">
    <property type="entry name" value="CBB3-TYPE CYTOCHROME C OXIDASE SUBUNIT FIXP"/>
    <property type="match status" value="1"/>
</dbReference>
<dbReference type="PANTHER" id="PTHR33751:SF1">
    <property type="entry name" value="CBB3-TYPE CYTOCHROME C OXIDASE SUBUNIT FIXP"/>
    <property type="match status" value="1"/>
</dbReference>
<dbReference type="Pfam" id="PF00034">
    <property type="entry name" value="Cytochrom_C"/>
    <property type="match status" value="1"/>
</dbReference>
<dbReference type="Pfam" id="PF13442">
    <property type="entry name" value="Cytochrome_CBB3"/>
    <property type="match status" value="1"/>
</dbReference>
<dbReference type="Pfam" id="PF14715">
    <property type="entry name" value="FixP_N"/>
    <property type="match status" value="1"/>
</dbReference>
<dbReference type="PIRSF" id="PIRSF000006">
    <property type="entry name" value="Cbb3-Cox_fixP"/>
    <property type="match status" value="1"/>
</dbReference>
<dbReference type="PRINTS" id="PR00605">
    <property type="entry name" value="CYTCHROMECIC"/>
</dbReference>
<dbReference type="SUPFAM" id="SSF46626">
    <property type="entry name" value="Cytochrome c"/>
    <property type="match status" value="2"/>
</dbReference>
<dbReference type="PROSITE" id="PS51007">
    <property type="entry name" value="CYTC"/>
    <property type="match status" value="2"/>
</dbReference>
<feature type="chain" id="PRO_0000412295" description="Cbb3-type cytochrome c oxidase subunit FixP">
    <location>
        <begin position="1"/>
        <end position="293"/>
    </location>
</feature>
<feature type="transmembrane region" description="Helical" evidence="6">
    <location>
        <begin position="43"/>
        <end position="63"/>
    </location>
</feature>
<feature type="domain" description="Cytochrome c 1" evidence="7">
    <location>
        <begin position="114"/>
        <end position="201"/>
    </location>
</feature>
<feature type="domain" description="Cytochrome c 2" evidence="7">
    <location>
        <begin position="209"/>
        <end position="290"/>
    </location>
</feature>
<feature type="region of interest" description="Disordered" evidence="8">
    <location>
        <begin position="1"/>
        <end position="25"/>
    </location>
</feature>
<feature type="compositionally biased region" description="Basic and acidic residues" evidence="8">
    <location>
        <begin position="1"/>
        <end position="11"/>
    </location>
</feature>
<feature type="binding site" description="covalent" evidence="2">
    <location>
        <position position="127"/>
    </location>
    <ligand>
        <name>heme c</name>
        <dbReference type="ChEBI" id="CHEBI:61717"/>
        <label>1</label>
    </ligand>
</feature>
<feature type="binding site" description="covalent" evidence="2">
    <location>
        <position position="130"/>
    </location>
    <ligand>
        <name>heme c</name>
        <dbReference type="ChEBI" id="CHEBI:61717"/>
        <label>1</label>
    </ligand>
</feature>
<feature type="binding site" description="axial binding residue" evidence="2">
    <location>
        <position position="131"/>
    </location>
    <ligand>
        <name>heme c</name>
        <dbReference type="ChEBI" id="CHEBI:61717"/>
        <label>1</label>
    </ligand>
    <ligandPart>
        <name>Fe</name>
        <dbReference type="ChEBI" id="CHEBI:18248"/>
    </ligandPart>
</feature>
<feature type="binding site" description="axial binding residue" evidence="2">
    <location>
        <position position="178"/>
    </location>
    <ligand>
        <name>heme c</name>
        <dbReference type="ChEBI" id="CHEBI:61717"/>
        <label>2</label>
    </ligand>
    <ligandPart>
        <name>Fe</name>
        <dbReference type="ChEBI" id="CHEBI:18248"/>
    </ligandPart>
</feature>
<feature type="binding site" description="covalent" evidence="2">
    <location>
        <position position="222"/>
    </location>
    <ligand>
        <name>heme c</name>
        <dbReference type="ChEBI" id="CHEBI:61717"/>
        <label>2</label>
    </ligand>
</feature>
<feature type="binding site" description="covalent" evidence="2">
    <location>
        <position position="225"/>
    </location>
    <ligand>
        <name>heme c</name>
        <dbReference type="ChEBI" id="CHEBI:61717"/>
        <label>2</label>
    </ligand>
</feature>
<feature type="binding site" description="axial binding residue" evidence="2">
    <location>
        <position position="226"/>
    </location>
    <ligand>
        <name>heme c</name>
        <dbReference type="ChEBI" id="CHEBI:61717"/>
        <label>2</label>
    </ligand>
    <ligandPart>
        <name>Fe</name>
        <dbReference type="ChEBI" id="CHEBI:18248"/>
    </ligandPart>
</feature>
<feature type="binding site" description="axial binding residue" evidence="2">
    <location>
        <position position="267"/>
    </location>
    <ligand>
        <name>heme c</name>
        <dbReference type="ChEBI" id="CHEBI:61717"/>
        <label>1</label>
    </ligand>
    <ligandPart>
        <name>Fe</name>
        <dbReference type="ChEBI" id="CHEBI:18248"/>
    </ligandPart>
</feature>
<accession>A8HZ17</accession>
<accession>Q43945</accession>